<accession>A1WVB2</accession>
<dbReference type="EMBL" id="CP000544">
    <property type="protein sequence ID" value="ABM61624.1"/>
    <property type="molecule type" value="Genomic_DNA"/>
</dbReference>
<dbReference type="RefSeq" id="WP_011813647.1">
    <property type="nucleotide sequence ID" value="NC_008789.1"/>
</dbReference>
<dbReference type="SMR" id="A1WVB2"/>
<dbReference type="STRING" id="349124.Hhal_0848"/>
<dbReference type="KEGG" id="hha:Hhal_0848"/>
<dbReference type="eggNOG" id="COG0093">
    <property type="taxonomic scope" value="Bacteria"/>
</dbReference>
<dbReference type="HOGENOM" id="CLU_095071_2_1_6"/>
<dbReference type="OrthoDB" id="9806379at2"/>
<dbReference type="Proteomes" id="UP000000647">
    <property type="component" value="Chromosome"/>
</dbReference>
<dbReference type="GO" id="GO:0022625">
    <property type="term" value="C:cytosolic large ribosomal subunit"/>
    <property type="evidence" value="ECO:0007669"/>
    <property type="project" value="TreeGrafter"/>
</dbReference>
<dbReference type="GO" id="GO:0070180">
    <property type="term" value="F:large ribosomal subunit rRNA binding"/>
    <property type="evidence" value="ECO:0007669"/>
    <property type="project" value="TreeGrafter"/>
</dbReference>
<dbReference type="GO" id="GO:0003735">
    <property type="term" value="F:structural constituent of ribosome"/>
    <property type="evidence" value="ECO:0007669"/>
    <property type="project" value="InterPro"/>
</dbReference>
<dbReference type="GO" id="GO:0006412">
    <property type="term" value="P:translation"/>
    <property type="evidence" value="ECO:0007669"/>
    <property type="project" value="UniProtKB-UniRule"/>
</dbReference>
<dbReference type="CDD" id="cd00337">
    <property type="entry name" value="Ribosomal_uL14"/>
    <property type="match status" value="1"/>
</dbReference>
<dbReference type="FunFam" id="2.40.150.20:FF:000001">
    <property type="entry name" value="50S ribosomal protein L14"/>
    <property type="match status" value="1"/>
</dbReference>
<dbReference type="Gene3D" id="2.40.150.20">
    <property type="entry name" value="Ribosomal protein L14"/>
    <property type="match status" value="1"/>
</dbReference>
<dbReference type="HAMAP" id="MF_01367">
    <property type="entry name" value="Ribosomal_uL14"/>
    <property type="match status" value="1"/>
</dbReference>
<dbReference type="InterPro" id="IPR000218">
    <property type="entry name" value="Ribosomal_uL14"/>
</dbReference>
<dbReference type="InterPro" id="IPR005745">
    <property type="entry name" value="Ribosomal_uL14_bac-type"/>
</dbReference>
<dbReference type="InterPro" id="IPR019972">
    <property type="entry name" value="Ribosomal_uL14_CS"/>
</dbReference>
<dbReference type="InterPro" id="IPR036853">
    <property type="entry name" value="Ribosomal_uL14_sf"/>
</dbReference>
<dbReference type="NCBIfam" id="TIGR01067">
    <property type="entry name" value="rplN_bact"/>
    <property type="match status" value="1"/>
</dbReference>
<dbReference type="PANTHER" id="PTHR11761">
    <property type="entry name" value="50S/60S RIBOSOMAL PROTEIN L14/L23"/>
    <property type="match status" value="1"/>
</dbReference>
<dbReference type="PANTHER" id="PTHR11761:SF3">
    <property type="entry name" value="LARGE RIBOSOMAL SUBUNIT PROTEIN UL14M"/>
    <property type="match status" value="1"/>
</dbReference>
<dbReference type="Pfam" id="PF00238">
    <property type="entry name" value="Ribosomal_L14"/>
    <property type="match status" value="1"/>
</dbReference>
<dbReference type="SMART" id="SM01374">
    <property type="entry name" value="Ribosomal_L14"/>
    <property type="match status" value="1"/>
</dbReference>
<dbReference type="SUPFAM" id="SSF50193">
    <property type="entry name" value="Ribosomal protein L14"/>
    <property type="match status" value="1"/>
</dbReference>
<dbReference type="PROSITE" id="PS00049">
    <property type="entry name" value="RIBOSOMAL_L14"/>
    <property type="match status" value="1"/>
</dbReference>
<proteinExistence type="inferred from homology"/>
<sequence length="122" mass="13431">MIQMESLLKAADNSGARQVQCIKVLGGSKRRYAGIGDIVKVSVKDAIPRGRVKKGEVYNAVVVRSKRGVRRADGSQIRFDGNAAVLLNNNLQPIGTRVFGPVTRELRNERFMRIISLAPEVL</sequence>
<name>RL14_HALHL</name>
<protein>
    <recommendedName>
        <fullName evidence="1">Large ribosomal subunit protein uL14</fullName>
    </recommendedName>
    <alternativeName>
        <fullName evidence="2">50S ribosomal protein L14</fullName>
    </alternativeName>
</protein>
<reference key="1">
    <citation type="submission" date="2006-12" db="EMBL/GenBank/DDBJ databases">
        <title>Complete sequence of Halorhodospira halophila SL1.</title>
        <authorList>
            <consortium name="US DOE Joint Genome Institute"/>
            <person name="Copeland A."/>
            <person name="Lucas S."/>
            <person name="Lapidus A."/>
            <person name="Barry K."/>
            <person name="Detter J.C."/>
            <person name="Glavina del Rio T."/>
            <person name="Hammon N."/>
            <person name="Israni S."/>
            <person name="Dalin E."/>
            <person name="Tice H."/>
            <person name="Pitluck S."/>
            <person name="Saunders E."/>
            <person name="Brettin T."/>
            <person name="Bruce D."/>
            <person name="Han C."/>
            <person name="Tapia R."/>
            <person name="Schmutz J."/>
            <person name="Larimer F."/>
            <person name="Land M."/>
            <person name="Hauser L."/>
            <person name="Kyrpides N."/>
            <person name="Mikhailova N."/>
            <person name="Hoff W."/>
            <person name="Richardson P."/>
        </authorList>
    </citation>
    <scope>NUCLEOTIDE SEQUENCE [LARGE SCALE GENOMIC DNA]</scope>
    <source>
        <strain>DSM 244 / SL1</strain>
    </source>
</reference>
<organism>
    <name type="scientific">Halorhodospira halophila (strain DSM 244 / SL1)</name>
    <name type="common">Ectothiorhodospira halophila (strain DSM 244 / SL1)</name>
    <dbReference type="NCBI Taxonomy" id="349124"/>
    <lineage>
        <taxon>Bacteria</taxon>
        <taxon>Pseudomonadati</taxon>
        <taxon>Pseudomonadota</taxon>
        <taxon>Gammaproteobacteria</taxon>
        <taxon>Chromatiales</taxon>
        <taxon>Ectothiorhodospiraceae</taxon>
        <taxon>Halorhodospira</taxon>
    </lineage>
</organism>
<comment type="function">
    <text evidence="1">Binds to 23S rRNA. Forms part of two intersubunit bridges in the 70S ribosome.</text>
</comment>
<comment type="subunit">
    <text evidence="1">Part of the 50S ribosomal subunit. Forms a cluster with proteins L3 and L19. In the 70S ribosome, L14 and L19 interact and together make contacts with the 16S rRNA in bridges B5 and B8.</text>
</comment>
<comment type="similarity">
    <text evidence="1">Belongs to the universal ribosomal protein uL14 family.</text>
</comment>
<keyword id="KW-1185">Reference proteome</keyword>
<keyword id="KW-0687">Ribonucleoprotein</keyword>
<keyword id="KW-0689">Ribosomal protein</keyword>
<keyword id="KW-0694">RNA-binding</keyword>
<keyword id="KW-0699">rRNA-binding</keyword>
<feature type="chain" id="PRO_1000055592" description="Large ribosomal subunit protein uL14">
    <location>
        <begin position="1"/>
        <end position="122"/>
    </location>
</feature>
<gene>
    <name evidence="1" type="primary">rplN</name>
    <name type="ordered locus">Hhal_0848</name>
</gene>
<evidence type="ECO:0000255" key="1">
    <source>
        <dbReference type="HAMAP-Rule" id="MF_01367"/>
    </source>
</evidence>
<evidence type="ECO:0000305" key="2"/>